<sequence>MERVRQMFSCVSGMIYRPTDSIAEEYHKWYYGNFVWNTTTWMGIKCLKSVSDMWNYQEILIELEPSLVIEFGSRFGGSALFFANVMMHIGQPFKVLSVDISHKDLDPAARQPDILFIESPSTAPAIAEQIRRLKNEYPGKIFAILDSDHSMKQVLAEMKLLQPLLTAGDYLVVEDSNLNGHPVLPRFGAGPYEAIEAYEREFPGDYEHDVAREKKFGFTFATNGFLIRK</sequence>
<protein>
    <recommendedName>
        <fullName>Rhamnosyl O-methyltransferase</fullName>
        <ecNumber>2.1.1.-</ecNumber>
    </recommendedName>
</protein>
<reference key="1">
    <citation type="journal article" date="2001" name="Nature">
        <title>Massive gene decay in the leprosy bacillus.</title>
        <authorList>
            <person name="Cole S.T."/>
            <person name="Eiglmeier K."/>
            <person name="Parkhill J."/>
            <person name="James K.D."/>
            <person name="Thomson N.R."/>
            <person name="Wheeler P.R."/>
            <person name="Honore N."/>
            <person name="Garnier T."/>
            <person name="Churcher C.M."/>
            <person name="Harris D.E."/>
            <person name="Mungall K.L."/>
            <person name="Basham D."/>
            <person name="Brown D."/>
            <person name="Chillingworth T."/>
            <person name="Connor R."/>
            <person name="Davies R.M."/>
            <person name="Devlin K."/>
            <person name="Duthoy S."/>
            <person name="Feltwell T."/>
            <person name="Fraser A."/>
            <person name="Hamlin N."/>
            <person name="Holroyd S."/>
            <person name="Hornsby T."/>
            <person name="Jagels K."/>
            <person name="Lacroix C."/>
            <person name="Maclean J."/>
            <person name="Moule S."/>
            <person name="Murphy L.D."/>
            <person name="Oliver K."/>
            <person name="Quail M.A."/>
            <person name="Rajandream M.A."/>
            <person name="Rutherford K.M."/>
            <person name="Rutter S."/>
            <person name="Seeger K."/>
            <person name="Simon S."/>
            <person name="Simmonds M."/>
            <person name="Skelton J."/>
            <person name="Squares R."/>
            <person name="Squares S."/>
            <person name="Stevens K."/>
            <person name="Taylor K."/>
            <person name="Whitehead S."/>
            <person name="Woodward J.R."/>
            <person name="Barrell B.G."/>
        </authorList>
    </citation>
    <scope>NUCLEOTIDE SEQUENCE [LARGE SCALE GENOMIC DNA]</scope>
    <source>
        <strain>TN</strain>
    </source>
</reference>
<organism>
    <name type="scientific">Mycobacterium leprae (strain TN)</name>
    <dbReference type="NCBI Taxonomy" id="272631"/>
    <lineage>
        <taxon>Bacteria</taxon>
        <taxon>Bacillati</taxon>
        <taxon>Actinomycetota</taxon>
        <taxon>Actinomycetes</taxon>
        <taxon>Mycobacteriales</taxon>
        <taxon>Mycobacteriaceae</taxon>
        <taxon>Mycobacterium</taxon>
    </lineage>
</organism>
<name>RNMT_MYCLE</name>
<comment type="function">
    <text evidence="1">Catalyzes the O-methylation of the hydroxyl group located on C-2 of the first rhamnosyl residue linked to the phenolic group of glycosylated phenolphthiocerol dimycocerosates (PGL) and p-hydroxybenzoic acid derivatives (p-HBAD).</text>
</comment>
<comment type="similarity">
    <text evidence="3">Belongs to the rhamnosyl O-methyltransferase family.</text>
</comment>
<feature type="signal peptide" evidence="2">
    <location>
        <begin position="1"/>
        <end position="23"/>
    </location>
</feature>
<feature type="chain" id="PRO_0000305180" description="Rhamnosyl O-methyltransferase">
    <location>
        <begin position="24"/>
        <end position="229"/>
    </location>
</feature>
<evidence type="ECO:0000250" key="1"/>
<evidence type="ECO:0000255" key="2"/>
<evidence type="ECO:0000305" key="3"/>
<accession>Q9CD89</accession>
<proteinExistence type="inferred from homology"/>
<dbReference type="EC" id="2.1.1.-"/>
<dbReference type="EMBL" id="AL583917">
    <property type="protein sequence ID" value="CAC29635.1"/>
    <property type="molecule type" value="Genomic_DNA"/>
</dbReference>
<dbReference type="PIR" id="G86924">
    <property type="entry name" value="G86924"/>
</dbReference>
<dbReference type="RefSeq" id="NP_301221.1">
    <property type="nucleotide sequence ID" value="NC_002677.1"/>
</dbReference>
<dbReference type="RefSeq" id="WP_010907546.1">
    <property type="nucleotide sequence ID" value="NC_002677.1"/>
</dbReference>
<dbReference type="SMR" id="Q9CD89"/>
<dbReference type="STRING" id="272631.gene:17573942"/>
<dbReference type="KEGG" id="mle:ML0127"/>
<dbReference type="PATRIC" id="fig|272631.5.peg.195"/>
<dbReference type="Leproma" id="ML0127"/>
<dbReference type="eggNOG" id="COG3510">
    <property type="taxonomic scope" value="Bacteria"/>
</dbReference>
<dbReference type="HOGENOM" id="CLU_063868_0_0_11"/>
<dbReference type="OrthoDB" id="189417at2"/>
<dbReference type="Proteomes" id="UP000000806">
    <property type="component" value="Chromosome"/>
</dbReference>
<dbReference type="GO" id="GO:0005886">
    <property type="term" value="C:plasma membrane"/>
    <property type="evidence" value="ECO:0007669"/>
    <property type="project" value="TreeGrafter"/>
</dbReference>
<dbReference type="GO" id="GO:0008168">
    <property type="term" value="F:methyltransferase activity"/>
    <property type="evidence" value="ECO:0007669"/>
    <property type="project" value="UniProtKB-KW"/>
</dbReference>
<dbReference type="GO" id="GO:0071770">
    <property type="term" value="P:DIM/DIP cell wall layer assembly"/>
    <property type="evidence" value="ECO:0007669"/>
    <property type="project" value="TreeGrafter"/>
</dbReference>
<dbReference type="GO" id="GO:0008610">
    <property type="term" value="P:lipid biosynthetic process"/>
    <property type="evidence" value="ECO:0007669"/>
    <property type="project" value="InterPro"/>
</dbReference>
<dbReference type="GO" id="GO:0032259">
    <property type="term" value="P:methylation"/>
    <property type="evidence" value="ECO:0007669"/>
    <property type="project" value="UniProtKB-KW"/>
</dbReference>
<dbReference type="Gene3D" id="3.40.50.150">
    <property type="entry name" value="Vaccinia Virus protein VP39"/>
    <property type="match status" value="1"/>
</dbReference>
<dbReference type="InterPro" id="IPR054932">
    <property type="entry name" value="RhmsylMtase"/>
</dbReference>
<dbReference type="InterPro" id="IPR007072">
    <property type="entry name" value="RNMT_CmcI"/>
</dbReference>
<dbReference type="InterPro" id="IPR029063">
    <property type="entry name" value="SAM-dependent_MTases_sf"/>
</dbReference>
<dbReference type="NCBIfam" id="NF045824">
    <property type="entry name" value="RhmsylMtase"/>
    <property type="match status" value="1"/>
</dbReference>
<dbReference type="PANTHER" id="PTHR40048">
    <property type="entry name" value="RHAMNOSYL O-METHYLTRANSFERASE"/>
    <property type="match status" value="1"/>
</dbReference>
<dbReference type="PANTHER" id="PTHR40048:SF1">
    <property type="entry name" value="RHAMNOSYL O-METHYLTRANSFERASE"/>
    <property type="match status" value="1"/>
</dbReference>
<dbReference type="Pfam" id="PF04989">
    <property type="entry name" value="RMNT_CmcI"/>
    <property type="match status" value="1"/>
</dbReference>
<dbReference type="SUPFAM" id="SSF53335">
    <property type="entry name" value="S-adenosyl-L-methionine-dependent methyltransferases"/>
    <property type="match status" value="1"/>
</dbReference>
<keyword id="KW-0444">Lipid biosynthesis</keyword>
<keyword id="KW-0443">Lipid metabolism</keyword>
<keyword id="KW-0489">Methyltransferase</keyword>
<keyword id="KW-1185">Reference proteome</keyword>
<keyword id="KW-0732">Signal</keyword>
<keyword id="KW-0808">Transferase</keyword>
<gene>
    <name type="ordered locus">ML0127</name>
</gene>